<gene>
    <name evidence="1" type="primary">rplS</name>
    <name type="ordered locus">CKL_1406</name>
</gene>
<sequence length="115" mass="13346">MLDIIKQIESQYIRTDLPNFNIGDTVKVHVRIKEGNRQRVQVFEGIVLKRQNGGVRETFTVRRVAYGVGVERTFPVNAPIIEKIQVVRRGKVRRAKLYYLRDRVGKAAKVKEILK</sequence>
<dbReference type="EMBL" id="CP000673">
    <property type="protein sequence ID" value="EDK33448.1"/>
    <property type="molecule type" value="Genomic_DNA"/>
</dbReference>
<dbReference type="RefSeq" id="WP_012101795.1">
    <property type="nucleotide sequence ID" value="NC_009706.1"/>
</dbReference>
<dbReference type="SMR" id="A5N817"/>
<dbReference type="STRING" id="431943.CKL_1406"/>
<dbReference type="KEGG" id="ckl:CKL_1406"/>
<dbReference type="eggNOG" id="COG0335">
    <property type="taxonomic scope" value="Bacteria"/>
</dbReference>
<dbReference type="HOGENOM" id="CLU_103507_2_1_9"/>
<dbReference type="Proteomes" id="UP000002411">
    <property type="component" value="Chromosome"/>
</dbReference>
<dbReference type="GO" id="GO:0022625">
    <property type="term" value="C:cytosolic large ribosomal subunit"/>
    <property type="evidence" value="ECO:0007669"/>
    <property type="project" value="TreeGrafter"/>
</dbReference>
<dbReference type="GO" id="GO:0003735">
    <property type="term" value="F:structural constituent of ribosome"/>
    <property type="evidence" value="ECO:0007669"/>
    <property type="project" value="InterPro"/>
</dbReference>
<dbReference type="GO" id="GO:0006412">
    <property type="term" value="P:translation"/>
    <property type="evidence" value="ECO:0007669"/>
    <property type="project" value="UniProtKB-UniRule"/>
</dbReference>
<dbReference type="FunFam" id="2.30.30.790:FF:000001">
    <property type="entry name" value="50S ribosomal protein L19"/>
    <property type="match status" value="1"/>
</dbReference>
<dbReference type="Gene3D" id="2.30.30.790">
    <property type="match status" value="1"/>
</dbReference>
<dbReference type="HAMAP" id="MF_00402">
    <property type="entry name" value="Ribosomal_bL19"/>
    <property type="match status" value="1"/>
</dbReference>
<dbReference type="InterPro" id="IPR001857">
    <property type="entry name" value="Ribosomal_bL19"/>
</dbReference>
<dbReference type="InterPro" id="IPR018257">
    <property type="entry name" value="Ribosomal_bL19_CS"/>
</dbReference>
<dbReference type="InterPro" id="IPR038657">
    <property type="entry name" value="Ribosomal_bL19_sf"/>
</dbReference>
<dbReference type="InterPro" id="IPR008991">
    <property type="entry name" value="Translation_prot_SH3-like_sf"/>
</dbReference>
<dbReference type="NCBIfam" id="TIGR01024">
    <property type="entry name" value="rplS_bact"/>
    <property type="match status" value="1"/>
</dbReference>
<dbReference type="PANTHER" id="PTHR15680:SF9">
    <property type="entry name" value="LARGE RIBOSOMAL SUBUNIT PROTEIN BL19M"/>
    <property type="match status" value="1"/>
</dbReference>
<dbReference type="PANTHER" id="PTHR15680">
    <property type="entry name" value="RIBOSOMAL PROTEIN L19"/>
    <property type="match status" value="1"/>
</dbReference>
<dbReference type="Pfam" id="PF01245">
    <property type="entry name" value="Ribosomal_L19"/>
    <property type="match status" value="1"/>
</dbReference>
<dbReference type="PIRSF" id="PIRSF002191">
    <property type="entry name" value="Ribosomal_L19"/>
    <property type="match status" value="1"/>
</dbReference>
<dbReference type="PRINTS" id="PR00061">
    <property type="entry name" value="RIBOSOMALL19"/>
</dbReference>
<dbReference type="SUPFAM" id="SSF50104">
    <property type="entry name" value="Translation proteins SH3-like domain"/>
    <property type="match status" value="1"/>
</dbReference>
<dbReference type="PROSITE" id="PS01015">
    <property type="entry name" value="RIBOSOMAL_L19"/>
    <property type="match status" value="1"/>
</dbReference>
<feature type="chain" id="PRO_1000080344" description="Large ribosomal subunit protein bL19">
    <location>
        <begin position="1"/>
        <end position="115"/>
    </location>
</feature>
<evidence type="ECO:0000255" key="1">
    <source>
        <dbReference type="HAMAP-Rule" id="MF_00402"/>
    </source>
</evidence>
<evidence type="ECO:0000305" key="2"/>
<accession>A5N817</accession>
<comment type="function">
    <text evidence="1">This protein is located at the 30S-50S ribosomal subunit interface and may play a role in the structure and function of the aminoacyl-tRNA binding site.</text>
</comment>
<comment type="similarity">
    <text evidence="1">Belongs to the bacterial ribosomal protein bL19 family.</text>
</comment>
<protein>
    <recommendedName>
        <fullName evidence="1">Large ribosomal subunit protein bL19</fullName>
    </recommendedName>
    <alternativeName>
        <fullName evidence="2">50S ribosomal protein L19</fullName>
    </alternativeName>
</protein>
<organism>
    <name type="scientific">Clostridium kluyveri (strain ATCC 8527 / DSM 555 / NBRC 12016 / NCIMB 10680 / K1)</name>
    <dbReference type="NCBI Taxonomy" id="431943"/>
    <lineage>
        <taxon>Bacteria</taxon>
        <taxon>Bacillati</taxon>
        <taxon>Bacillota</taxon>
        <taxon>Clostridia</taxon>
        <taxon>Eubacteriales</taxon>
        <taxon>Clostridiaceae</taxon>
        <taxon>Clostridium</taxon>
    </lineage>
</organism>
<name>RL19_CLOK5</name>
<keyword id="KW-1185">Reference proteome</keyword>
<keyword id="KW-0687">Ribonucleoprotein</keyword>
<keyword id="KW-0689">Ribosomal protein</keyword>
<reference key="1">
    <citation type="journal article" date="2008" name="Proc. Natl. Acad. Sci. U.S.A.">
        <title>The genome of Clostridium kluyveri, a strict anaerobe with unique metabolic features.</title>
        <authorList>
            <person name="Seedorf H."/>
            <person name="Fricke W.F."/>
            <person name="Veith B."/>
            <person name="Brueggemann H."/>
            <person name="Liesegang H."/>
            <person name="Strittmatter A."/>
            <person name="Miethke M."/>
            <person name="Buckel W."/>
            <person name="Hinderberger J."/>
            <person name="Li F."/>
            <person name="Hagemeier C."/>
            <person name="Thauer R.K."/>
            <person name="Gottschalk G."/>
        </authorList>
    </citation>
    <scope>NUCLEOTIDE SEQUENCE [LARGE SCALE GENOMIC DNA]</scope>
    <source>
        <strain>ATCC 8527 / DSM 555 / NBRC 12016 / NCIMB 10680 / K1</strain>
    </source>
</reference>
<proteinExistence type="inferred from homology"/>